<protein>
    <recommendedName>
        <fullName evidence="1">Xanthine phosphoribosyltransferase 1</fullName>
        <shortName evidence="1">XPRTase 1</shortName>
        <ecNumber evidence="1">2.4.2.22</ecNumber>
    </recommendedName>
</protein>
<proteinExistence type="inferred from homology"/>
<sequence length="190" mass="21464">MEALKEKILKEGKVREGNILKVDCFLNHQMDIKFLNEVGKEFRKRFEGEKVDKILTIEASGIAIAGIASQYFDYVPVVFAKKTESLNLDKDVYESNVHSFTKKKDYKVRVGKQFLNKGERVLIIDDFLAQGCATKGMIDLVEQAGAELVGIGIVIEKGFQDGRKVLEDLGVRVESLAIIDKLEDNKVYFK</sequence>
<evidence type="ECO:0000255" key="1">
    <source>
        <dbReference type="HAMAP-Rule" id="MF_01184"/>
    </source>
</evidence>
<name>XPT1_CLOPE</name>
<keyword id="KW-0963">Cytoplasm</keyword>
<keyword id="KW-0328">Glycosyltransferase</keyword>
<keyword id="KW-0660">Purine salvage</keyword>
<keyword id="KW-1185">Reference proteome</keyword>
<keyword id="KW-0808">Transferase</keyword>
<feature type="chain" id="PRO_0000339687" description="Xanthine phosphoribosyltransferase 1">
    <location>
        <begin position="1"/>
        <end position="190"/>
    </location>
</feature>
<feature type="binding site" evidence="1">
    <location>
        <position position="20"/>
    </location>
    <ligand>
        <name>xanthine</name>
        <dbReference type="ChEBI" id="CHEBI:17712"/>
    </ligand>
</feature>
<feature type="binding site" evidence="1">
    <location>
        <position position="27"/>
    </location>
    <ligand>
        <name>xanthine</name>
        <dbReference type="ChEBI" id="CHEBI:17712"/>
    </ligand>
</feature>
<feature type="binding site" evidence="1">
    <location>
        <begin position="129"/>
        <end position="133"/>
    </location>
    <ligand>
        <name>5-phospho-alpha-D-ribose 1-diphosphate</name>
        <dbReference type="ChEBI" id="CHEBI:58017"/>
    </ligand>
</feature>
<feature type="binding site" evidence="1">
    <location>
        <position position="157"/>
    </location>
    <ligand>
        <name>xanthine</name>
        <dbReference type="ChEBI" id="CHEBI:17712"/>
    </ligand>
</feature>
<organism>
    <name type="scientific">Clostridium perfringens (strain 13 / Type A)</name>
    <dbReference type="NCBI Taxonomy" id="195102"/>
    <lineage>
        <taxon>Bacteria</taxon>
        <taxon>Bacillati</taxon>
        <taxon>Bacillota</taxon>
        <taxon>Clostridia</taxon>
        <taxon>Eubacteriales</taxon>
        <taxon>Clostridiaceae</taxon>
        <taxon>Clostridium</taxon>
    </lineage>
</organism>
<dbReference type="EC" id="2.4.2.22" evidence="1"/>
<dbReference type="EMBL" id="BA000016">
    <property type="protein sequence ID" value="BAB80041.1"/>
    <property type="molecule type" value="Genomic_DNA"/>
</dbReference>
<dbReference type="RefSeq" id="WP_003458080.1">
    <property type="nucleotide sequence ID" value="NC_003366.1"/>
</dbReference>
<dbReference type="SMR" id="Q8XNJ8"/>
<dbReference type="STRING" id="195102.gene:10489591"/>
<dbReference type="KEGG" id="cpe:CPE0335"/>
<dbReference type="HOGENOM" id="CLU_099015_0_0_9"/>
<dbReference type="UniPathway" id="UPA00602">
    <property type="reaction ID" value="UER00658"/>
</dbReference>
<dbReference type="Proteomes" id="UP000000818">
    <property type="component" value="Chromosome"/>
</dbReference>
<dbReference type="GO" id="GO:0005737">
    <property type="term" value="C:cytoplasm"/>
    <property type="evidence" value="ECO:0007669"/>
    <property type="project" value="UniProtKB-SubCell"/>
</dbReference>
<dbReference type="GO" id="GO:0000310">
    <property type="term" value="F:xanthine phosphoribosyltransferase activity"/>
    <property type="evidence" value="ECO:0007669"/>
    <property type="project" value="UniProtKB-UniRule"/>
</dbReference>
<dbReference type="GO" id="GO:0006166">
    <property type="term" value="P:purine ribonucleoside salvage"/>
    <property type="evidence" value="ECO:0007669"/>
    <property type="project" value="UniProtKB-KW"/>
</dbReference>
<dbReference type="GO" id="GO:0046110">
    <property type="term" value="P:xanthine metabolic process"/>
    <property type="evidence" value="ECO:0007669"/>
    <property type="project" value="InterPro"/>
</dbReference>
<dbReference type="GO" id="GO:0032265">
    <property type="term" value="P:XMP salvage"/>
    <property type="evidence" value="ECO:0007669"/>
    <property type="project" value="UniProtKB-UniRule"/>
</dbReference>
<dbReference type="CDD" id="cd06223">
    <property type="entry name" value="PRTases_typeI"/>
    <property type="match status" value="1"/>
</dbReference>
<dbReference type="Gene3D" id="3.40.50.2020">
    <property type="match status" value="1"/>
</dbReference>
<dbReference type="HAMAP" id="MF_01184">
    <property type="entry name" value="XPRTase"/>
    <property type="match status" value="1"/>
</dbReference>
<dbReference type="InterPro" id="IPR000836">
    <property type="entry name" value="PRibTrfase_dom"/>
</dbReference>
<dbReference type="InterPro" id="IPR029057">
    <property type="entry name" value="PRTase-like"/>
</dbReference>
<dbReference type="InterPro" id="IPR050118">
    <property type="entry name" value="Pur/Pyrimidine_PRTase"/>
</dbReference>
<dbReference type="InterPro" id="IPR010079">
    <property type="entry name" value="Xanthine_PRibTrfase"/>
</dbReference>
<dbReference type="NCBIfam" id="NF006671">
    <property type="entry name" value="PRK09219.1"/>
    <property type="match status" value="1"/>
</dbReference>
<dbReference type="NCBIfam" id="TIGR01744">
    <property type="entry name" value="XPRTase"/>
    <property type="match status" value="1"/>
</dbReference>
<dbReference type="PANTHER" id="PTHR43864">
    <property type="entry name" value="HYPOXANTHINE/GUANINE PHOSPHORIBOSYLTRANSFERASE"/>
    <property type="match status" value="1"/>
</dbReference>
<dbReference type="PANTHER" id="PTHR43864:SF1">
    <property type="entry name" value="XANTHINE PHOSPHORIBOSYLTRANSFERASE"/>
    <property type="match status" value="1"/>
</dbReference>
<dbReference type="Pfam" id="PF00156">
    <property type="entry name" value="Pribosyltran"/>
    <property type="match status" value="1"/>
</dbReference>
<dbReference type="SUPFAM" id="SSF53271">
    <property type="entry name" value="PRTase-like"/>
    <property type="match status" value="1"/>
</dbReference>
<gene>
    <name evidence="1" type="primary">xpt1</name>
    <name type="ordered locus">CPE0335</name>
</gene>
<reference key="1">
    <citation type="journal article" date="2002" name="Proc. Natl. Acad. Sci. U.S.A.">
        <title>Complete genome sequence of Clostridium perfringens, an anaerobic flesh-eater.</title>
        <authorList>
            <person name="Shimizu T."/>
            <person name="Ohtani K."/>
            <person name="Hirakawa H."/>
            <person name="Ohshima K."/>
            <person name="Yamashita A."/>
            <person name="Shiba T."/>
            <person name="Ogasawara N."/>
            <person name="Hattori M."/>
            <person name="Kuhara S."/>
            <person name="Hayashi H."/>
        </authorList>
    </citation>
    <scope>NUCLEOTIDE SEQUENCE [LARGE SCALE GENOMIC DNA]</scope>
    <source>
        <strain>13 / Type A</strain>
    </source>
</reference>
<accession>Q8XNJ8</accession>
<comment type="function">
    <text evidence="1">Converts the preformed base xanthine, a product of nucleic acid breakdown, to xanthosine 5'-monophosphate (XMP), so it can be reused for RNA or DNA synthesis.</text>
</comment>
<comment type="catalytic activity">
    <reaction evidence="1">
        <text>XMP + diphosphate = xanthine + 5-phospho-alpha-D-ribose 1-diphosphate</text>
        <dbReference type="Rhea" id="RHEA:10800"/>
        <dbReference type="ChEBI" id="CHEBI:17712"/>
        <dbReference type="ChEBI" id="CHEBI:33019"/>
        <dbReference type="ChEBI" id="CHEBI:57464"/>
        <dbReference type="ChEBI" id="CHEBI:58017"/>
        <dbReference type="EC" id="2.4.2.22"/>
    </reaction>
</comment>
<comment type="pathway">
    <text evidence="1">Purine metabolism; XMP biosynthesis via salvage pathway; XMP from xanthine: step 1/1.</text>
</comment>
<comment type="subunit">
    <text evidence="1">Homodimer.</text>
</comment>
<comment type="subcellular location">
    <subcellularLocation>
        <location evidence="1">Cytoplasm</location>
    </subcellularLocation>
</comment>
<comment type="similarity">
    <text evidence="1">Belongs to the purine/pyrimidine phosphoribosyltransferase family. Xpt subfamily.</text>
</comment>